<accession>P08622</accession>
<proteinExistence type="evidence at protein level"/>
<evidence type="ECO:0000269" key="1">
    <source>
    </source>
</evidence>
<evidence type="ECO:0000269" key="2">
    <source>
    </source>
</evidence>
<evidence type="ECO:0000269" key="3">
    <source>
    </source>
</evidence>
<evidence type="ECO:0000269" key="4">
    <source>
    </source>
</evidence>
<evidence type="ECO:0000269" key="5">
    <source>
    </source>
</evidence>
<evidence type="ECO:0000269" key="6">
    <source>
    </source>
</evidence>
<evidence type="ECO:0000269" key="7">
    <source>
    </source>
</evidence>
<evidence type="ECO:0000269" key="8">
    <source>
    </source>
</evidence>
<evidence type="ECO:0000269" key="9">
    <source>
    </source>
</evidence>
<evidence type="ECO:0000269" key="10">
    <source>
    </source>
</evidence>
<evidence type="ECO:0000269" key="11">
    <source>
    </source>
</evidence>
<evidence type="ECO:0000305" key="12"/>
<evidence type="ECO:0007829" key="13">
    <source>
        <dbReference type="PDB" id="1BQ0"/>
    </source>
</evidence>
<evidence type="ECO:0007829" key="14">
    <source>
        <dbReference type="PDB" id="1EXK"/>
    </source>
</evidence>
<evidence type="ECO:0007829" key="15">
    <source>
        <dbReference type="PDB" id="1XBL"/>
    </source>
</evidence>
<evidence type="ECO:0007829" key="16">
    <source>
        <dbReference type="PDB" id="5NRO"/>
    </source>
</evidence>
<organism>
    <name type="scientific">Escherichia coli (strain K12)</name>
    <dbReference type="NCBI Taxonomy" id="83333"/>
    <lineage>
        <taxon>Bacteria</taxon>
        <taxon>Pseudomonadati</taxon>
        <taxon>Pseudomonadota</taxon>
        <taxon>Gammaproteobacteria</taxon>
        <taxon>Enterobacterales</taxon>
        <taxon>Enterobacteriaceae</taxon>
        <taxon>Escherichia</taxon>
    </lineage>
</organism>
<sequence length="376" mass="41100">MAKQDYYEILGVSKTAEEREIRKAYKRLAMKYHPDRNQGDKEAEAKFKEIKEAYEVLTDSQKRAAYDQYGHAAFEQGGMGGGGFGGGADFSDIFGDVFGDIFGGGRGRQRAARGADLRYNMELTLEEAVRGVTKEIRIPTLEECDVCHGSGAKPGTQPQTCPTCHGSGQVQMRQGFFAVQQTCPHCQGRGTLIKDPCNKCHGHGRVERSKTLSVKIPAGVDTGDRIRLAGEGEAGEHGAPAGDLYVQVQVKQHPIFEREGNNLYCEVPINFAMAALGGEIEVPTLDGRVKLKVPGETQTGKLFRMRGKGVKSVRGGAQGDLLCRVVVETPVGLNERQKQLLQELQESFGGPTGEHNSPRSKSFFDGVKKFFDDLTR</sequence>
<protein>
    <recommendedName>
        <fullName>Chaperone protein DnaJ</fullName>
    </recommendedName>
    <alternativeName>
        <fullName>HSP40</fullName>
    </alternativeName>
    <alternativeName>
        <fullName>Heat shock protein J</fullName>
    </alternativeName>
</protein>
<dbReference type="EMBL" id="M12544">
    <property type="protein sequence ID" value="AAA00009.1"/>
    <property type="molecule type" value="Genomic_DNA"/>
</dbReference>
<dbReference type="EMBL" id="M12565">
    <property type="protein sequence ID" value="AAA23693.1"/>
    <property type="molecule type" value="Genomic_DNA"/>
</dbReference>
<dbReference type="EMBL" id="U00096">
    <property type="protein sequence ID" value="AAC73126.1"/>
    <property type="molecule type" value="Genomic_DNA"/>
</dbReference>
<dbReference type="EMBL" id="AP009048">
    <property type="protein sequence ID" value="BAB96590.1"/>
    <property type="molecule type" value="Genomic_DNA"/>
</dbReference>
<dbReference type="PIR" id="A92572">
    <property type="entry name" value="HHECDJ"/>
</dbReference>
<dbReference type="RefSeq" id="NP_414556.1">
    <property type="nucleotide sequence ID" value="NC_000913.3"/>
</dbReference>
<dbReference type="RefSeq" id="WP_001118476.1">
    <property type="nucleotide sequence ID" value="NZ_LN832404.1"/>
</dbReference>
<dbReference type="PDB" id="1BQ0">
    <property type="method" value="NMR"/>
    <property type="chains" value="A=2-104"/>
</dbReference>
<dbReference type="PDB" id="1BQZ">
    <property type="method" value="NMR"/>
    <property type="chains" value="A=2-78"/>
</dbReference>
<dbReference type="PDB" id="1EXK">
    <property type="method" value="NMR"/>
    <property type="chains" value="A=131-209"/>
</dbReference>
<dbReference type="PDB" id="1XBL">
    <property type="method" value="NMR"/>
    <property type="chains" value="A=2-108"/>
</dbReference>
<dbReference type="PDB" id="5NRO">
    <property type="method" value="X-ray"/>
    <property type="resolution" value="3.25 A"/>
    <property type="chains" value="B=1-105"/>
</dbReference>
<dbReference type="PDBsum" id="1BQ0"/>
<dbReference type="PDBsum" id="1BQZ"/>
<dbReference type="PDBsum" id="1EXK"/>
<dbReference type="PDBsum" id="1XBL"/>
<dbReference type="PDBsum" id="5NRO"/>
<dbReference type="EMDB" id="EMD-2332"/>
<dbReference type="EMDB" id="EMD-2333"/>
<dbReference type="EMDB" id="EMD-2334"/>
<dbReference type="SMR" id="P08622"/>
<dbReference type="BioGRID" id="4259725">
    <property type="interactions" value="307"/>
</dbReference>
<dbReference type="BioGRID" id="849156">
    <property type="interactions" value="3"/>
</dbReference>
<dbReference type="DIP" id="DIP-9460N"/>
<dbReference type="FunCoup" id="P08622">
    <property type="interactions" value="1057"/>
</dbReference>
<dbReference type="IntAct" id="P08622">
    <property type="interactions" value="101"/>
</dbReference>
<dbReference type="MINT" id="P08622"/>
<dbReference type="STRING" id="511145.b0015"/>
<dbReference type="jPOST" id="P08622"/>
<dbReference type="PaxDb" id="511145-b0015"/>
<dbReference type="EnsemblBacteria" id="AAC73126">
    <property type="protein sequence ID" value="AAC73126"/>
    <property type="gene ID" value="b0015"/>
</dbReference>
<dbReference type="GeneID" id="944753"/>
<dbReference type="KEGG" id="ecj:JW0014"/>
<dbReference type="KEGG" id="eco:b0015"/>
<dbReference type="KEGG" id="ecoc:C3026_00075"/>
<dbReference type="PATRIC" id="fig|1411691.4.peg.2269"/>
<dbReference type="EchoBASE" id="EB0236"/>
<dbReference type="eggNOG" id="COG0484">
    <property type="taxonomic scope" value="Bacteria"/>
</dbReference>
<dbReference type="HOGENOM" id="CLU_017633_0_7_6"/>
<dbReference type="InParanoid" id="P08622"/>
<dbReference type="OMA" id="MATDYYA"/>
<dbReference type="OrthoDB" id="9779889at2"/>
<dbReference type="PhylomeDB" id="P08622"/>
<dbReference type="BioCyc" id="EcoCyc:EG10240-MONOMER"/>
<dbReference type="BioCyc" id="MetaCyc:EG10240-MONOMER"/>
<dbReference type="EvolutionaryTrace" id="P08622"/>
<dbReference type="PRO" id="PR:P08622"/>
<dbReference type="Proteomes" id="UP000000625">
    <property type="component" value="Chromosome"/>
</dbReference>
<dbReference type="GO" id="GO:0005737">
    <property type="term" value="C:cytoplasm"/>
    <property type="evidence" value="ECO:0000314"/>
    <property type="project" value="EcoliWiki"/>
</dbReference>
<dbReference type="GO" id="GO:0005829">
    <property type="term" value="C:cytosol"/>
    <property type="evidence" value="ECO:0000314"/>
    <property type="project" value="EcoCyc"/>
</dbReference>
<dbReference type="GO" id="GO:0016020">
    <property type="term" value="C:membrane"/>
    <property type="evidence" value="ECO:0000314"/>
    <property type="project" value="EcoliWiki"/>
</dbReference>
<dbReference type="GO" id="GO:0032991">
    <property type="term" value="C:protein-containing complex"/>
    <property type="evidence" value="ECO:0000314"/>
    <property type="project" value="CAFA"/>
</dbReference>
<dbReference type="GO" id="GO:0005524">
    <property type="term" value="F:ATP binding"/>
    <property type="evidence" value="ECO:0007669"/>
    <property type="project" value="InterPro"/>
</dbReference>
<dbReference type="GO" id="GO:0031072">
    <property type="term" value="F:heat shock protein binding"/>
    <property type="evidence" value="ECO:0007669"/>
    <property type="project" value="InterPro"/>
</dbReference>
<dbReference type="GO" id="GO:0003756">
    <property type="term" value="F:protein disulfide isomerase activity"/>
    <property type="evidence" value="ECO:0000314"/>
    <property type="project" value="EcoliWiki"/>
</dbReference>
<dbReference type="GO" id="GO:0042803">
    <property type="term" value="F:protein homodimerization activity"/>
    <property type="evidence" value="ECO:0000314"/>
    <property type="project" value="EcoCyc"/>
</dbReference>
<dbReference type="GO" id="GO:0015035">
    <property type="term" value="F:protein-disulfide reductase activity"/>
    <property type="evidence" value="ECO:0000314"/>
    <property type="project" value="EcoCyc"/>
</dbReference>
<dbReference type="GO" id="GO:0051087">
    <property type="term" value="F:protein-folding chaperone binding"/>
    <property type="evidence" value="ECO:0000353"/>
    <property type="project" value="CAFA"/>
</dbReference>
<dbReference type="GO" id="GO:0016989">
    <property type="term" value="F:sigma factor antagonist activity"/>
    <property type="evidence" value="ECO:0000314"/>
    <property type="project" value="EcoCyc"/>
</dbReference>
<dbReference type="GO" id="GO:0051082">
    <property type="term" value="F:unfolded protein binding"/>
    <property type="evidence" value="ECO:0000314"/>
    <property type="project" value="CAFA"/>
</dbReference>
<dbReference type="GO" id="GO:0008270">
    <property type="term" value="F:zinc ion binding"/>
    <property type="evidence" value="ECO:0000314"/>
    <property type="project" value="EcoliWiki"/>
</dbReference>
<dbReference type="GO" id="GO:0051085">
    <property type="term" value="P:chaperone cofactor-dependent protein refolding"/>
    <property type="evidence" value="ECO:0000314"/>
    <property type="project" value="CAFA"/>
</dbReference>
<dbReference type="GO" id="GO:0006260">
    <property type="term" value="P:DNA replication"/>
    <property type="evidence" value="ECO:0000315"/>
    <property type="project" value="EcoliWiki"/>
</dbReference>
<dbReference type="GO" id="GO:0006457">
    <property type="term" value="P:protein folding"/>
    <property type="evidence" value="ECO:0000314"/>
    <property type="project" value="EcoliWiki"/>
</dbReference>
<dbReference type="GO" id="GO:0042026">
    <property type="term" value="P:protein refolding"/>
    <property type="evidence" value="ECO:0000314"/>
    <property type="project" value="EcoliWiki"/>
</dbReference>
<dbReference type="GO" id="GO:0043335">
    <property type="term" value="P:protein unfolding"/>
    <property type="evidence" value="ECO:0000314"/>
    <property type="project" value="EcoCyc"/>
</dbReference>
<dbReference type="GO" id="GO:0065003">
    <property type="term" value="P:protein-containing complex assembly"/>
    <property type="evidence" value="ECO:0000314"/>
    <property type="project" value="CAFA"/>
</dbReference>
<dbReference type="GO" id="GO:0009408">
    <property type="term" value="P:response to heat"/>
    <property type="evidence" value="ECO:0000315"/>
    <property type="project" value="EcoCyc"/>
</dbReference>
<dbReference type="GO" id="GO:0016032">
    <property type="term" value="P:viral process"/>
    <property type="evidence" value="ECO:0000314"/>
    <property type="project" value="EcoCyc"/>
</dbReference>
<dbReference type="CDD" id="cd06257">
    <property type="entry name" value="DnaJ"/>
    <property type="match status" value="1"/>
</dbReference>
<dbReference type="CDD" id="cd10747">
    <property type="entry name" value="DnaJ_C"/>
    <property type="match status" value="1"/>
</dbReference>
<dbReference type="CDD" id="cd10719">
    <property type="entry name" value="DnaJ_zf"/>
    <property type="match status" value="1"/>
</dbReference>
<dbReference type="FunFam" id="1.10.287.110:FF:000003">
    <property type="entry name" value="Molecular chaperone DnaJ"/>
    <property type="match status" value="1"/>
</dbReference>
<dbReference type="FunFam" id="2.10.230.10:FF:000002">
    <property type="entry name" value="Molecular chaperone DnaJ"/>
    <property type="match status" value="1"/>
</dbReference>
<dbReference type="FunFam" id="2.60.260.20:FF:000004">
    <property type="entry name" value="Molecular chaperone DnaJ"/>
    <property type="match status" value="1"/>
</dbReference>
<dbReference type="Gene3D" id="1.10.287.110">
    <property type="entry name" value="DnaJ domain"/>
    <property type="match status" value="1"/>
</dbReference>
<dbReference type="Gene3D" id="2.10.230.10">
    <property type="entry name" value="Heat shock protein DnaJ, cysteine-rich domain"/>
    <property type="match status" value="1"/>
</dbReference>
<dbReference type="Gene3D" id="2.60.260.20">
    <property type="entry name" value="Urease metallochaperone UreE, N-terminal domain"/>
    <property type="match status" value="2"/>
</dbReference>
<dbReference type="HAMAP" id="MF_01152">
    <property type="entry name" value="DnaJ"/>
    <property type="match status" value="1"/>
</dbReference>
<dbReference type="InterPro" id="IPR012724">
    <property type="entry name" value="DnaJ"/>
</dbReference>
<dbReference type="InterPro" id="IPR002939">
    <property type="entry name" value="DnaJ_C"/>
</dbReference>
<dbReference type="InterPro" id="IPR001623">
    <property type="entry name" value="DnaJ_domain"/>
</dbReference>
<dbReference type="InterPro" id="IPR018253">
    <property type="entry name" value="DnaJ_domain_CS"/>
</dbReference>
<dbReference type="InterPro" id="IPR008971">
    <property type="entry name" value="HSP40/DnaJ_pept-bd"/>
</dbReference>
<dbReference type="InterPro" id="IPR001305">
    <property type="entry name" value="HSP_DnaJ_Cys-rich_dom"/>
</dbReference>
<dbReference type="InterPro" id="IPR036410">
    <property type="entry name" value="HSP_DnaJ_Cys-rich_dom_sf"/>
</dbReference>
<dbReference type="InterPro" id="IPR036869">
    <property type="entry name" value="J_dom_sf"/>
</dbReference>
<dbReference type="NCBIfam" id="TIGR02349">
    <property type="entry name" value="DnaJ_bact"/>
    <property type="match status" value="1"/>
</dbReference>
<dbReference type="NCBIfam" id="NF008035">
    <property type="entry name" value="PRK10767.1"/>
    <property type="match status" value="1"/>
</dbReference>
<dbReference type="PANTHER" id="PTHR43096:SF48">
    <property type="entry name" value="CHAPERONE PROTEIN DNAJ"/>
    <property type="match status" value="1"/>
</dbReference>
<dbReference type="PANTHER" id="PTHR43096">
    <property type="entry name" value="DNAJ HOMOLOG 1, MITOCHONDRIAL-RELATED"/>
    <property type="match status" value="1"/>
</dbReference>
<dbReference type="Pfam" id="PF00226">
    <property type="entry name" value="DnaJ"/>
    <property type="match status" value="1"/>
</dbReference>
<dbReference type="Pfam" id="PF01556">
    <property type="entry name" value="DnaJ_C"/>
    <property type="match status" value="1"/>
</dbReference>
<dbReference type="Pfam" id="PF00684">
    <property type="entry name" value="DnaJ_CXXCXGXG"/>
    <property type="match status" value="1"/>
</dbReference>
<dbReference type="PRINTS" id="PR00625">
    <property type="entry name" value="JDOMAIN"/>
</dbReference>
<dbReference type="SMART" id="SM00271">
    <property type="entry name" value="DnaJ"/>
    <property type="match status" value="1"/>
</dbReference>
<dbReference type="SUPFAM" id="SSF46565">
    <property type="entry name" value="Chaperone J-domain"/>
    <property type="match status" value="1"/>
</dbReference>
<dbReference type="SUPFAM" id="SSF57938">
    <property type="entry name" value="DnaJ/Hsp40 cysteine-rich domain"/>
    <property type="match status" value="1"/>
</dbReference>
<dbReference type="SUPFAM" id="SSF49493">
    <property type="entry name" value="HSP40/DnaJ peptide-binding domain"/>
    <property type="match status" value="2"/>
</dbReference>
<dbReference type="PROSITE" id="PS00636">
    <property type="entry name" value="DNAJ_1"/>
    <property type="match status" value="1"/>
</dbReference>
<dbReference type="PROSITE" id="PS50076">
    <property type="entry name" value="DNAJ_2"/>
    <property type="match status" value="1"/>
</dbReference>
<dbReference type="PROSITE" id="PS51188">
    <property type="entry name" value="ZF_CR"/>
    <property type="match status" value="1"/>
</dbReference>
<comment type="function">
    <text evidence="4 5 6 8">Interacts with DnaK and GrpE to disassemble a protein complex at the origins of replication of phage lambda and several plasmids. Participates actively in the response to hyperosmotic and heat shock by preventing the aggregation of stress-denatured proteins and by disaggregating proteins, also in an autonomous, DnaK-independent fashion. Unfolded proteins bind initially to DnaJ; upon interaction with the DnaJ-bound protein, DnaK hydrolyzes its bound ATP, resulting in the formation of a stable complex. GrpE releases ADP from DnaK; ATP binding to DnaK triggers the release of the substrate protein, thus completing the reaction cycle. Several rounds of ATP-dependent interactions between DnaJ, DnaK and GrpE are required for fully efficient folding.</text>
</comment>
<comment type="cofactor">
    <cofactor>
        <name>Zn(2+)</name>
        <dbReference type="ChEBI" id="CHEBI:29105"/>
    </cofactor>
    <text>Binds 2 Zn(2+) ions per monomer.</text>
</comment>
<comment type="subunit">
    <text>Homodimer.</text>
</comment>
<comment type="interaction">
    <interactant intactId="EBI-545285">
        <id>P08622</id>
    </interactant>
    <interactant intactId="EBI-542092">
        <id>P0A6Y8</id>
        <label>dnaK</label>
    </interactant>
    <organismsDiffer>false</organismsDiffer>
    <experiments>8</experiments>
</comment>
<comment type="interaction">
    <interactant intactId="EBI-545285">
        <id>P08622</id>
    </interactant>
    <interactant intactId="EBI-542934">
        <id>P06993</id>
        <label>malT</label>
    </interactant>
    <organismsDiffer>false</organismsDiffer>
    <experiments>5</experiments>
</comment>
<comment type="subcellular location">
    <subcellularLocation>
        <location>Cytoplasm</location>
    </subcellularLocation>
</comment>
<comment type="induction">
    <text>By heat shock under the control of the HtpR regulatory protein.</text>
</comment>
<comment type="domain">
    <text>The J domain is necessary and sufficient to stimulate DnaK ATPase activity. Zinc center 1 plays an important role in the autonomous, DnaK-independent chaperone activity of DnaJ. Zinc center 2 is essential for interaction with DnaK and for DnaJ activity.</text>
</comment>
<comment type="disruption phenotype">
    <text evidence="3">Single dnaJ and double dnaK-dnaJ disruption are non-essential; synthetic lethality is seen in a triple tig-dnaK-dnaJ disruption, although this depends on temperature (triple disruptions grow slowly at 20 and 34 degrees Celsius but not at 43 degrees) and strain background.</text>
</comment>
<comment type="similarity">
    <text evidence="12">Belongs to the DnaJ family.</text>
</comment>
<gene>
    <name type="primary">dnaJ</name>
    <name type="synonym">groP</name>
    <name type="ordered locus">b0015</name>
    <name type="ordered locus">JW0014</name>
</gene>
<feature type="initiator methionine" description="Removed" evidence="9">
    <location>
        <position position="1"/>
    </location>
</feature>
<feature type="chain" id="PRO_0000070777" description="Chaperone protein DnaJ">
    <location>
        <begin position="2"/>
        <end position="376"/>
    </location>
</feature>
<feature type="domain" description="J">
    <location>
        <begin position="3"/>
        <end position="72"/>
    </location>
</feature>
<feature type="repeat" description="CXXCXGXG motif">
    <location>
        <begin position="144"/>
        <end position="151"/>
    </location>
</feature>
<feature type="repeat" description="CXXCXGXG motif">
    <location>
        <begin position="161"/>
        <end position="168"/>
    </location>
</feature>
<feature type="repeat" description="CXXCXGXG motif">
    <location>
        <begin position="183"/>
        <end position="190"/>
    </location>
</feature>
<feature type="repeat" description="CXXCXGXG motif">
    <location>
        <begin position="197"/>
        <end position="204"/>
    </location>
</feature>
<feature type="zinc finger region" description="CR-type">
    <location>
        <begin position="131"/>
        <end position="209"/>
    </location>
</feature>
<feature type="binding site">
    <location>
        <position position="144"/>
    </location>
    <ligand>
        <name>Zn(2+)</name>
        <dbReference type="ChEBI" id="CHEBI:29105"/>
        <label>1</label>
    </ligand>
</feature>
<feature type="binding site">
    <location>
        <position position="147"/>
    </location>
    <ligand>
        <name>Zn(2+)</name>
        <dbReference type="ChEBI" id="CHEBI:29105"/>
        <label>1</label>
    </ligand>
</feature>
<feature type="binding site">
    <location>
        <position position="161"/>
    </location>
    <ligand>
        <name>Zn(2+)</name>
        <dbReference type="ChEBI" id="CHEBI:29105"/>
        <label>2</label>
    </ligand>
</feature>
<feature type="binding site">
    <location>
        <position position="164"/>
    </location>
    <ligand>
        <name>Zn(2+)</name>
        <dbReference type="ChEBI" id="CHEBI:29105"/>
        <label>2</label>
    </ligand>
</feature>
<feature type="binding site">
    <location>
        <position position="183"/>
    </location>
    <ligand>
        <name>Zn(2+)</name>
        <dbReference type="ChEBI" id="CHEBI:29105"/>
        <label>2</label>
    </ligand>
</feature>
<feature type="binding site">
    <location>
        <position position="186"/>
    </location>
    <ligand>
        <name>Zn(2+)</name>
        <dbReference type="ChEBI" id="CHEBI:29105"/>
        <label>2</label>
    </ligand>
</feature>
<feature type="binding site">
    <location>
        <position position="197"/>
    </location>
    <ligand>
        <name>Zn(2+)</name>
        <dbReference type="ChEBI" id="CHEBI:29105"/>
        <label>1</label>
    </ligand>
</feature>
<feature type="binding site">
    <location>
        <position position="200"/>
    </location>
    <ligand>
        <name>Zn(2+)</name>
        <dbReference type="ChEBI" id="CHEBI:29105"/>
        <label>1</label>
    </ligand>
</feature>
<feature type="mutagenesis site" description="No effect.">
    <original>RE</original>
    <variation>AA</variation>
    <location>
        <begin position="19"/>
        <end position="20"/>
    </location>
</feature>
<feature type="mutagenesis site" description="Loss of activity.">
    <original>Y</original>
    <variation>A</variation>
    <location>
        <position position="25"/>
    </location>
</feature>
<feature type="mutagenesis site" description="Loss of activity.">
    <original>K</original>
    <variation>A</variation>
    <location>
        <position position="26"/>
    </location>
</feature>
<feature type="mutagenesis site" description="No effect.">
    <original>R</original>
    <variation>A</variation>
    <location>
        <position position="27"/>
    </location>
</feature>
<feature type="mutagenesis site" description="No effect.">
    <original>L</original>
    <variation>A</variation>
    <location>
        <position position="28"/>
    </location>
</feature>
<feature type="mutagenesis site" description="No effect.">
    <original>A</original>
    <variation>G</variation>
    <location>
        <position position="29"/>
    </location>
</feature>
<feature type="mutagenesis site" description="No effect.">
    <original>MK</original>
    <variation>AA</variation>
    <location>
        <begin position="30"/>
        <end position="31"/>
    </location>
</feature>
<feature type="mutagenesis site" description="No effect.">
    <original>Y</original>
    <variation>A</variation>
    <location>
        <position position="32"/>
    </location>
</feature>
<feature type="mutagenesis site" description="Loss of ability to stimulate DnaK ATPase activity." evidence="10">
    <original>H</original>
    <variation>Q</variation>
    <location>
        <position position="33"/>
    </location>
</feature>
<feature type="mutagenesis site" description="Loss of function.">
    <original>P</original>
    <variation>F</variation>
    <location>
        <position position="34"/>
    </location>
</feature>
<feature type="mutagenesis site" description="Loss of ability to bind DnaK." evidence="11">
    <original>D</original>
    <variation>N</variation>
    <location>
        <position position="35"/>
    </location>
</feature>
<feature type="mutagenesis site" description="Decrease in chaperone function.">
    <original>R</original>
    <variation>A</variation>
    <location>
        <position position="36"/>
    </location>
</feature>
<feature type="mutagenesis site" description="Decrease in chaperone function.">
    <original>N</original>
    <variation>A</variation>
    <location>
        <position position="37"/>
    </location>
</feature>
<feature type="mutagenesis site" description="No effect.">
    <original>Q</original>
    <variation>A</variation>
    <location>
        <position position="38"/>
    </location>
</feature>
<feature type="mutagenesis site" description="No effect.">
    <original>KE</original>
    <variation>AA</variation>
    <location>
        <begin position="41"/>
        <end position="42"/>
    </location>
</feature>
<feature type="mutagenesis site" description="No effect." evidence="1">
    <original>E</original>
    <variation>A</variation>
    <location>
        <position position="44"/>
    </location>
</feature>
<feature type="mutagenesis site" description="No effect.">
    <original>K</original>
    <variation>A</variation>
    <location>
        <position position="46"/>
    </location>
</feature>
<feature type="mutagenesis site" description="Loss of function.">
    <original>F</original>
    <variation>A</variation>
    <location>
        <position position="47"/>
    </location>
</feature>
<feature type="mutagenesis site" description="No effect.">
    <original>KE</original>
    <variation>AA</variation>
    <location>
        <begin position="48"/>
        <end position="49"/>
    </location>
</feature>
<feature type="mutagenesis site" description="No effect.">
    <original>KE</original>
    <variation>AA</variation>
    <location>
        <begin position="51"/>
        <end position="52"/>
    </location>
</feature>
<feature type="mutagenesis site" description="No effect." evidence="1">
    <original>Y</original>
    <variation>A</variation>
    <location>
        <position position="54"/>
    </location>
</feature>
<feature type="mutagenesis site" description="No effect." evidence="1">
    <original>E</original>
    <variation>A</variation>
    <location>
        <position position="55"/>
    </location>
</feature>
<feature type="mutagenesis site" description="No effect.">
    <original>TD</original>
    <variation>AA</variation>
    <location>
        <begin position="58"/>
        <end position="59"/>
    </location>
</feature>
<feature type="mutagenesis site" description="No effect.">
    <original>SQ</original>
    <variation>AA</variation>
    <location>
        <begin position="60"/>
        <end position="61"/>
    </location>
</feature>
<feature type="mutagenesis site" description="No effect.">
    <original>KR</original>
    <variation>AA</variation>
    <location>
        <begin position="62"/>
        <end position="63"/>
    </location>
</feature>
<feature type="mutagenesis site" description="No effect.">
    <original>DQ</original>
    <variation>AA</variation>
    <location>
        <begin position="67"/>
        <end position="68"/>
    </location>
</feature>
<feature type="mutagenesis site" description="Loss of DnaK-independent chaperone activity; when associated with S-147; S-197 and S-200." evidence="2">
    <original>C</original>
    <variation>S</variation>
    <location>
        <position position="144"/>
    </location>
</feature>
<feature type="mutagenesis site" description="Loss of DnaK-independent chaperone activity; when associated with S-144; S-197 and S-200." evidence="2">
    <original>C</original>
    <variation>S</variation>
    <location>
        <position position="147"/>
    </location>
</feature>
<feature type="mutagenesis site" description="No effect on chaperone function; when associated with H-183." evidence="2 7">
    <original>C</original>
    <variation>H</variation>
    <location>
        <position position="161"/>
    </location>
</feature>
<feature type="mutagenesis site" description="Loss of function; when associated with S-164; S-183 and S-186." evidence="2 7">
    <original>C</original>
    <variation>S</variation>
    <location>
        <position position="161"/>
    </location>
</feature>
<feature type="mutagenesis site" description="No effect on chaperone function; when associated with H-183." evidence="2 7">
    <original>C</original>
    <variation>H</variation>
    <location>
        <position position="164"/>
    </location>
</feature>
<feature type="mutagenesis site" description="Loss of function; when associated with S-161; S-183 and S-186." evidence="2 7">
    <original>C</original>
    <variation>S</variation>
    <location>
        <position position="164"/>
    </location>
</feature>
<feature type="mutagenesis site" description="No effect on chaperone function. Same effect; when associated with H-161 or H-164." evidence="2 7">
    <original>C</original>
    <variation>H</variation>
    <location>
        <position position="183"/>
    </location>
</feature>
<feature type="mutagenesis site" description="Loss of function; when associated with S-161; S-164 and S-186." evidence="2 7">
    <original>C</original>
    <variation>S</variation>
    <location>
        <position position="183"/>
    </location>
</feature>
<feature type="mutagenesis site" description="No effect on chaperone function." evidence="2 7">
    <original>C</original>
    <variation>H</variation>
    <location>
        <position position="186"/>
    </location>
</feature>
<feature type="mutagenesis site" description="Loss of function; when associated with S-161; S-164 and S-184." evidence="2 7">
    <original>C</original>
    <variation>S</variation>
    <location>
        <position position="186"/>
    </location>
</feature>
<feature type="mutagenesis site" description="Loss of DnaK-independent chaperone activity; when associated with S-144; S-147 and S-200." evidence="2">
    <original>C</original>
    <variation>S</variation>
    <location>
        <position position="197"/>
    </location>
</feature>
<feature type="mutagenesis site" description="Loss of DnaK-independent chaperone activity; when associated with S-144; S-147 and S-197." evidence="2">
    <original>C</original>
    <variation>S</variation>
    <location>
        <position position="200"/>
    </location>
</feature>
<feature type="helix" evidence="16">
    <location>
        <begin position="6"/>
        <end position="10"/>
    </location>
</feature>
<feature type="strand" evidence="15">
    <location>
        <begin position="13"/>
        <end position="15"/>
    </location>
</feature>
<feature type="helix" evidence="16">
    <location>
        <begin position="18"/>
        <end position="32"/>
    </location>
</feature>
<feature type="helix" evidence="16">
    <location>
        <begin position="34"/>
        <end position="37"/>
    </location>
</feature>
<feature type="turn" evidence="13">
    <location>
        <begin position="38"/>
        <end position="40"/>
    </location>
</feature>
<feature type="helix" evidence="16">
    <location>
        <begin position="41"/>
        <end position="58"/>
    </location>
</feature>
<feature type="helix" evidence="16">
    <location>
        <begin position="60"/>
        <end position="64"/>
    </location>
</feature>
<feature type="turn" evidence="13">
    <location>
        <begin position="66"/>
        <end position="68"/>
    </location>
</feature>
<feature type="turn" evidence="13">
    <location>
        <begin position="70"/>
        <end position="72"/>
    </location>
</feature>
<feature type="turn" evidence="14">
    <location>
        <begin position="132"/>
        <end position="134"/>
    </location>
</feature>
<feature type="strand" evidence="14">
    <location>
        <begin position="141"/>
        <end position="143"/>
    </location>
</feature>
<feature type="helix" evidence="14">
    <location>
        <begin position="145"/>
        <end position="147"/>
    </location>
</feature>
<feature type="turn" evidence="14">
    <location>
        <begin position="148"/>
        <end position="150"/>
    </location>
</feature>
<feature type="strand" evidence="14">
    <location>
        <begin position="154"/>
        <end position="156"/>
    </location>
</feature>
<feature type="turn" evidence="14">
    <location>
        <begin position="162"/>
        <end position="166"/>
    </location>
</feature>
<feature type="strand" evidence="14">
    <location>
        <begin position="167"/>
        <end position="174"/>
    </location>
</feature>
<feature type="strand" evidence="14">
    <location>
        <begin position="177"/>
        <end position="182"/>
    </location>
</feature>
<feature type="turn" evidence="14">
    <location>
        <begin position="184"/>
        <end position="188"/>
    </location>
</feature>
<feature type="strand" evidence="14">
    <location>
        <begin position="189"/>
        <end position="192"/>
    </location>
</feature>
<feature type="strand" evidence="14">
    <location>
        <begin position="194"/>
        <end position="196"/>
    </location>
</feature>
<feature type="helix" evidence="14">
    <location>
        <begin position="198"/>
        <end position="200"/>
    </location>
</feature>
<feature type="strand" evidence="14">
    <location>
        <begin position="203"/>
        <end position="207"/>
    </location>
</feature>
<keyword id="KW-0002">3D-structure</keyword>
<keyword id="KW-0143">Chaperone</keyword>
<keyword id="KW-0963">Cytoplasm</keyword>
<keyword id="KW-0903">Direct protein sequencing</keyword>
<keyword id="KW-0235">DNA replication</keyword>
<keyword id="KW-0479">Metal-binding</keyword>
<keyword id="KW-1185">Reference proteome</keyword>
<keyword id="KW-0677">Repeat</keyword>
<keyword id="KW-0346">Stress response</keyword>
<keyword id="KW-0862">Zinc</keyword>
<keyword id="KW-0863">Zinc-finger</keyword>
<reference key="1">
    <citation type="journal article" date="1986" name="J. Biol. Chem.">
        <title>Nucleotide sequence of the Escherichia coli dnaJ gene and purification of the gene product.</title>
        <authorList>
            <person name="Ohki M."/>
            <person name="Tamura F."/>
            <person name="Nishimura S."/>
            <person name="Uchida H."/>
        </authorList>
    </citation>
    <scope>NUCLEOTIDE SEQUENCE [GENOMIC DNA]</scope>
    <scope>PROTEIN SEQUENCE OF 2-6</scope>
</reference>
<reference key="2">
    <citation type="journal article" date="1986" name="J. Biol. Chem.">
        <title>The nucleotide sequence of the Escherichia coli K12 dnaJ+ gene. A gene that encodes a heat shock protein.</title>
        <authorList>
            <person name="Bardwell J.C.A."/>
            <person name="Tilly K."/>
            <person name="Craig E."/>
            <person name="King J."/>
            <person name="Zylicz M."/>
            <person name="Georgopoulos C."/>
        </authorList>
    </citation>
    <scope>NUCLEOTIDE SEQUENCE [GENOMIC DNA]</scope>
    <source>
        <strain>K12</strain>
    </source>
</reference>
<reference key="3">
    <citation type="journal article" date="1992" name="Nucleic Acids Res.">
        <title>Systematic sequencing of the Escherichia coli genome: analysis of the 0-2.4 min region.</title>
        <authorList>
            <person name="Yura T."/>
            <person name="Mori H."/>
            <person name="Nagai H."/>
            <person name="Nagata T."/>
            <person name="Ishihama A."/>
            <person name="Fujita N."/>
            <person name="Isono K."/>
            <person name="Mizobuchi K."/>
            <person name="Nakata A."/>
        </authorList>
    </citation>
    <scope>NUCLEOTIDE SEQUENCE [LARGE SCALE GENOMIC DNA]</scope>
    <source>
        <strain>K12</strain>
    </source>
</reference>
<reference key="4">
    <citation type="journal article" date="1997" name="Science">
        <title>The complete genome sequence of Escherichia coli K-12.</title>
        <authorList>
            <person name="Blattner F.R."/>
            <person name="Plunkett G. III"/>
            <person name="Bloch C.A."/>
            <person name="Perna N.T."/>
            <person name="Burland V."/>
            <person name="Riley M."/>
            <person name="Collado-Vides J."/>
            <person name="Glasner J.D."/>
            <person name="Rode C.K."/>
            <person name="Mayhew G.F."/>
            <person name="Gregor J."/>
            <person name="Davis N.W."/>
            <person name="Kirkpatrick H.A."/>
            <person name="Goeden M.A."/>
            <person name="Rose D.J."/>
            <person name="Mau B."/>
            <person name="Shao Y."/>
        </authorList>
    </citation>
    <scope>NUCLEOTIDE SEQUENCE [LARGE SCALE GENOMIC DNA]</scope>
    <source>
        <strain>K12 / MG1655 / ATCC 47076</strain>
    </source>
</reference>
<reference key="5">
    <citation type="journal article" date="2006" name="Mol. Syst. Biol.">
        <title>Highly accurate genome sequences of Escherichia coli K-12 strains MG1655 and W3110.</title>
        <authorList>
            <person name="Hayashi K."/>
            <person name="Morooka N."/>
            <person name="Yamamoto Y."/>
            <person name="Fujita K."/>
            <person name="Isono K."/>
            <person name="Choi S."/>
            <person name="Ohtsubo E."/>
            <person name="Baba T."/>
            <person name="Wanner B.L."/>
            <person name="Mori H."/>
            <person name="Horiuchi T."/>
        </authorList>
    </citation>
    <scope>NUCLEOTIDE SEQUENCE [LARGE SCALE GENOMIC DNA]</scope>
    <source>
        <strain>K12 / W3110 / ATCC 27325 / DSM 5911</strain>
    </source>
</reference>
<reference key="6">
    <citation type="journal article" date="1991" name="Proc. Natl. Acad. Sci. U.S.A.">
        <title>Escherichia coli DnaJ and GrpE heat shock proteins jointly stimulate ATPase activity of DnaK.</title>
        <authorList>
            <person name="Liberek K."/>
            <person name="Marszalek J."/>
            <person name="Ang D."/>
            <person name="Georgopoulos C."/>
            <person name="Zylicz M."/>
        </authorList>
    </citation>
    <scope>FUNCTION</scope>
</reference>
<reference key="7">
    <citation type="journal article" date="1997" name="Electrophoresis">
        <title>Escherichia coli proteome analysis using the gene-protein database.</title>
        <authorList>
            <person name="VanBogelen R.A."/>
            <person name="Abshire K.Z."/>
            <person name="Moldover B."/>
            <person name="Olson E.R."/>
            <person name="Neidhardt F.C."/>
        </authorList>
    </citation>
    <scope>IDENTIFICATION BY 2D-GEL</scope>
</reference>
<reference key="8">
    <citation type="journal article" date="2004" name="J. Biol. Chem.">
        <title>Successive and synergistic action of the Hsp70 and Hsp100 chaperones in protein disaggregation.</title>
        <authorList>
            <person name="Zietkiewicz S."/>
            <person name="Krzewska J."/>
            <person name="Liberek K."/>
        </authorList>
    </citation>
    <scope>FUNCTION</scope>
</reference>
<reference key="9">
    <citation type="journal article" date="2004" name="FEBS Lett.">
        <title>Immediate response of the DnaK molecular chaperone system to heat shock.</title>
        <authorList>
            <person name="Siegenthaler R.K."/>
            <person name="Grimshaw J.P."/>
            <person name="Christen P."/>
        </authorList>
    </citation>
    <scope>ROLE IN HEAT-SHOCK RESPONSE</scope>
</reference>
<reference key="10">
    <citation type="journal article" date="2004" name="EMBO Rep.">
        <title>In vivo analysis of the overlapping functions of DnaK and trigger factor.</title>
        <authorList>
            <person name="Genevaux P."/>
            <person name="Keppel F."/>
            <person name="Schwager F."/>
            <person name="Langendijk-Genevaux P.S."/>
            <person name="Hartl F.U."/>
            <person name="Georgopoulos C."/>
        </authorList>
    </citation>
    <scope>DISRUPTION PHENOTYPE</scope>
    <source>
        <strain>K12 / MC4100 / ATCC 35695 / DSM 6574</strain>
    </source>
</reference>
<reference key="11">
    <citation type="journal article" date="2004" name="J. Biol. Chem.">
        <title>Trigonal DnaK-DnaJ complex versus free DnaK and DnaJ: heat stress converts the former to the latter, and only the latter can do disaggregation in cooperation with ClpB.</title>
        <authorList>
            <person name="Watanabe Y.H."/>
            <person name="Yoshida M."/>
        </authorList>
    </citation>
    <scope>INTERACTION WITH DNAK</scope>
</reference>
<reference key="12">
    <citation type="journal article" date="2004" name="J. Biol. Chem.">
        <title>The DnaK-DnaJ-GrpE chaperone system activates inert wild type pi initiator protein of R6K into a form active in replication initiation.</title>
        <authorList>
            <person name="Zzaman S."/>
            <person name="Reddy J.M."/>
            <person name="Bastia D."/>
        </authorList>
    </citation>
    <scope>ROLE IN PLASMID DNA REPLICATION</scope>
</reference>
<reference key="13">
    <citation type="journal article" date="1994" name="J. Biol. Chem.">
        <title>The NH2-terminal 108 amino acids of the Escherichia coli DnaJ protein stimulate the ATPase activity of DnaK and are sufficient for lambda replication.</title>
        <authorList>
            <person name="Wall D."/>
            <person name="Zylicz M."/>
            <person name="Georgopoulos C."/>
        </authorList>
    </citation>
    <scope>MUTAGENESIS OF HIS-33</scope>
</reference>
<reference key="14">
    <citation type="journal article" date="1998" name="Proc. Natl. Acad. Sci. U.S.A.">
        <title>Interaction of the Hsp70 molecular chaperone, DnaK, with its cochaperone DnaJ.</title>
        <authorList>
            <person name="Suh W.-C."/>
            <person name="Burkholder W.F."/>
            <person name="Lu C.Z."/>
            <person name="Zhao X."/>
            <person name="Gottesman M.E."/>
            <person name="Gross C.A."/>
        </authorList>
    </citation>
    <scope>MUTAGENESIS OF ASP-35</scope>
</reference>
<reference key="15">
    <citation type="journal article" date="2002" name="Genetics">
        <title>Scanning mutagenesis identifies amino acid residues essential for the in vivo activity of the Escherichia coli DnaJ (Hsp40) J-domain.</title>
        <authorList>
            <person name="Genevaux P."/>
            <person name="Schwager F."/>
            <person name="Georgopoulos C."/>
            <person name="Kelley W.L."/>
        </authorList>
    </citation>
    <scope>MUTAGENESIS OF ARG-19; GLU-20; 25-TYR--GLN-38; LYS-41; GLU-42; GLU-44; 46-LYS--GLU-49; LYS-51; GLU-52; TYR-54; GLU-55; 58-THR--ARG-63; ASP-67 AND GLN-68</scope>
</reference>
<reference key="16">
    <citation type="journal article" date="2003" name="J. Biol. Chem.">
        <title>The roles of the two zinc binding sites in DnaJ.</title>
        <authorList>
            <person name="Linke K."/>
            <person name="Wolfram T."/>
            <person name="Bussemer J."/>
            <person name="Jakob U."/>
        </authorList>
    </citation>
    <scope>MUTAGENESIS OF CYS-144; CYS-147; CYS-161; CYS-164; CYS-183; CYS-186; CYS-197 AND CYS-200</scope>
</reference>
<reference key="17">
    <citation type="journal article" date="2005" name="Biochemistry">
        <title>Contributions of cysteine residues in Zn2 to zinc fingers and thiol-disulfide oxidoreductase activities of chaperone DnaJ.</title>
        <authorList>
            <person name="Shi Y.-Y."/>
            <person name="Tang W."/>
            <person name="Hao S.-F."/>
            <person name="Wang C.-C."/>
        </authorList>
    </citation>
    <scope>MUTAGENESIS OF CYS-161; CYS-164; CYS-183 AND CYS-186</scope>
</reference>
<reference key="18">
    <citation type="journal article" date="1996" name="J. Mol. Biol.">
        <title>NMR structure of the J-domain and the Gly/Phe-rich region of the Escherichia coli DnaJ chaperone.</title>
        <authorList>
            <person name="Pellechia M."/>
            <person name="Szyperski T."/>
            <person name="Wall D."/>
            <person name="Georgopoulos C."/>
            <person name="Wuethrich K."/>
        </authorList>
    </citation>
    <scope>STRUCTURE BY NMR OF 1-108</scope>
</reference>
<reference key="19">
    <citation type="journal article" date="1999" name="Protein Sci.">
        <title>The influence of C-terminal extension on the structure of the 'J-domain' in E. coli DnaJ.</title>
        <authorList>
            <person name="Huang K."/>
            <person name="Flanagan J.M."/>
            <person name="Prestegard J.H."/>
        </authorList>
    </citation>
    <scope>STRUCTURE BY NMR OF 1-105</scope>
</reference>
<reference key="20">
    <citation type="journal article" date="2000" name="J. Mol. Biol.">
        <title>Solution structure of the cysteine-rich domain of the Escherichia coli chaperone protein DnaJ.</title>
        <authorList>
            <person name="Martinez-Yamout M."/>
            <person name="Legge G.B."/>
            <person name="Zhang O."/>
            <person name="Wright P.E."/>
            <person name="Dyson H.J."/>
        </authorList>
    </citation>
    <scope>STRUCTURE BY NMR OF 131-209</scope>
</reference>
<name>DNAJ_ECOLI</name>